<keyword id="KW-1185">Reference proteome</keyword>
<keyword id="KW-0687">Ribonucleoprotein</keyword>
<keyword id="KW-0689">Ribosomal protein</keyword>
<organism>
    <name type="scientific">Leuconostoc mesenteroides subsp. mesenteroides (strain ATCC 8293 / DSM 20343 / BCRC 11652 / CCM 1803 / JCM 6124 / NCDO 523 / NBRC 100496 / NCIMB 8023 / NCTC 12954 / NRRL B-1118 / 37Y)</name>
    <dbReference type="NCBI Taxonomy" id="203120"/>
    <lineage>
        <taxon>Bacteria</taxon>
        <taxon>Bacillati</taxon>
        <taxon>Bacillota</taxon>
        <taxon>Bacilli</taxon>
        <taxon>Lactobacillales</taxon>
        <taxon>Lactobacillaceae</taxon>
        <taxon>Leuconostoc</taxon>
    </lineage>
</organism>
<dbReference type="EMBL" id="CP000414">
    <property type="protein sequence ID" value="ABJ62400.1"/>
    <property type="molecule type" value="Genomic_DNA"/>
</dbReference>
<dbReference type="RefSeq" id="WP_011680015.1">
    <property type="nucleotide sequence ID" value="NC_008531.1"/>
</dbReference>
<dbReference type="SMR" id="Q03WM2"/>
<dbReference type="EnsemblBacteria" id="ABJ62400">
    <property type="protein sequence ID" value="ABJ62400"/>
    <property type="gene ID" value="LEUM_1303"/>
</dbReference>
<dbReference type="GeneID" id="97503784"/>
<dbReference type="KEGG" id="lme:LEUM_1303"/>
<dbReference type="eggNOG" id="COG0828">
    <property type="taxonomic scope" value="Bacteria"/>
</dbReference>
<dbReference type="HOGENOM" id="CLU_159258_3_2_9"/>
<dbReference type="Proteomes" id="UP000000362">
    <property type="component" value="Chromosome"/>
</dbReference>
<dbReference type="GO" id="GO:1990904">
    <property type="term" value="C:ribonucleoprotein complex"/>
    <property type="evidence" value="ECO:0007669"/>
    <property type="project" value="UniProtKB-KW"/>
</dbReference>
<dbReference type="GO" id="GO:0005840">
    <property type="term" value="C:ribosome"/>
    <property type="evidence" value="ECO:0007669"/>
    <property type="project" value="UniProtKB-KW"/>
</dbReference>
<dbReference type="GO" id="GO:0003735">
    <property type="term" value="F:structural constituent of ribosome"/>
    <property type="evidence" value="ECO:0007669"/>
    <property type="project" value="InterPro"/>
</dbReference>
<dbReference type="GO" id="GO:0006412">
    <property type="term" value="P:translation"/>
    <property type="evidence" value="ECO:0007669"/>
    <property type="project" value="UniProtKB-UniRule"/>
</dbReference>
<dbReference type="Gene3D" id="1.20.5.1150">
    <property type="entry name" value="Ribosomal protein S8"/>
    <property type="match status" value="1"/>
</dbReference>
<dbReference type="HAMAP" id="MF_00358">
    <property type="entry name" value="Ribosomal_bS21"/>
    <property type="match status" value="1"/>
</dbReference>
<dbReference type="InterPro" id="IPR001911">
    <property type="entry name" value="Ribosomal_bS21"/>
</dbReference>
<dbReference type="InterPro" id="IPR018278">
    <property type="entry name" value="Ribosomal_bS21_CS"/>
</dbReference>
<dbReference type="InterPro" id="IPR038380">
    <property type="entry name" value="Ribosomal_bS21_sf"/>
</dbReference>
<dbReference type="NCBIfam" id="TIGR00030">
    <property type="entry name" value="S21p"/>
    <property type="match status" value="1"/>
</dbReference>
<dbReference type="PANTHER" id="PTHR21109">
    <property type="entry name" value="MITOCHONDRIAL 28S RIBOSOMAL PROTEIN S21"/>
    <property type="match status" value="1"/>
</dbReference>
<dbReference type="PANTHER" id="PTHR21109:SF22">
    <property type="entry name" value="SMALL RIBOSOMAL SUBUNIT PROTEIN BS21"/>
    <property type="match status" value="1"/>
</dbReference>
<dbReference type="Pfam" id="PF01165">
    <property type="entry name" value="Ribosomal_S21"/>
    <property type="match status" value="1"/>
</dbReference>
<dbReference type="PRINTS" id="PR00976">
    <property type="entry name" value="RIBOSOMALS21"/>
</dbReference>
<dbReference type="PROSITE" id="PS01181">
    <property type="entry name" value="RIBOSOMAL_S21"/>
    <property type="match status" value="1"/>
</dbReference>
<sequence>MAKVIVRKNESLDDALRRFKRGVSKDGTLQEYRKREYYVKPSVARKLKSEAAQKRNKKKGR</sequence>
<evidence type="ECO:0000255" key="1">
    <source>
        <dbReference type="HAMAP-Rule" id="MF_00358"/>
    </source>
</evidence>
<evidence type="ECO:0000305" key="2"/>
<comment type="similarity">
    <text evidence="1">Belongs to the bacterial ribosomal protein bS21 family.</text>
</comment>
<feature type="chain" id="PRO_1000005133" description="Small ribosomal subunit protein bS21">
    <location>
        <begin position="1"/>
        <end position="61"/>
    </location>
</feature>
<proteinExistence type="inferred from homology"/>
<protein>
    <recommendedName>
        <fullName evidence="1">Small ribosomal subunit protein bS21</fullName>
    </recommendedName>
    <alternativeName>
        <fullName evidence="2">30S ribosomal protein S21</fullName>
    </alternativeName>
</protein>
<gene>
    <name evidence="1" type="primary">rpsU</name>
    <name type="ordered locus">LEUM_1303</name>
</gene>
<reference key="1">
    <citation type="journal article" date="2006" name="Proc. Natl. Acad. Sci. U.S.A.">
        <title>Comparative genomics of the lactic acid bacteria.</title>
        <authorList>
            <person name="Makarova K.S."/>
            <person name="Slesarev A."/>
            <person name="Wolf Y.I."/>
            <person name="Sorokin A."/>
            <person name="Mirkin B."/>
            <person name="Koonin E.V."/>
            <person name="Pavlov A."/>
            <person name="Pavlova N."/>
            <person name="Karamychev V."/>
            <person name="Polouchine N."/>
            <person name="Shakhova V."/>
            <person name="Grigoriev I."/>
            <person name="Lou Y."/>
            <person name="Rohksar D."/>
            <person name="Lucas S."/>
            <person name="Huang K."/>
            <person name="Goodstein D.M."/>
            <person name="Hawkins T."/>
            <person name="Plengvidhya V."/>
            <person name="Welker D."/>
            <person name="Hughes J."/>
            <person name="Goh Y."/>
            <person name="Benson A."/>
            <person name="Baldwin K."/>
            <person name="Lee J.-H."/>
            <person name="Diaz-Muniz I."/>
            <person name="Dosti B."/>
            <person name="Smeianov V."/>
            <person name="Wechter W."/>
            <person name="Barabote R."/>
            <person name="Lorca G."/>
            <person name="Altermann E."/>
            <person name="Barrangou R."/>
            <person name="Ganesan B."/>
            <person name="Xie Y."/>
            <person name="Rawsthorne H."/>
            <person name="Tamir D."/>
            <person name="Parker C."/>
            <person name="Breidt F."/>
            <person name="Broadbent J.R."/>
            <person name="Hutkins R."/>
            <person name="O'Sullivan D."/>
            <person name="Steele J."/>
            <person name="Unlu G."/>
            <person name="Saier M.H. Jr."/>
            <person name="Klaenhammer T."/>
            <person name="Richardson P."/>
            <person name="Kozyavkin S."/>
            <person name="Weimer B.C."/>
            <person name="Mills D.A."/>
        </authorList>
    </citation>
    <scope>NUCLEOTIDE SEQUENCE [LARGE SCALE GENOMIC DNA]</scope>
    <source>
        <strain>ATCC 8293 / DSM 20343 / BCRC 11652 / CCM 1803 / JCM 6124 / NCDO 523 / NBRC 100496 / NCIMB 8023 / NCTC 12954 / NRRL B-1118 / 37Y</strain>
    </source>
</reference>
<name>RS21_LEUMM</name>
<accession>Q03WM2</accession>